<accession>Q32B02</accession>
<gene>
    <name evidence="1" type="primary">tsgA</name>
    <name type="ordered locus">SDY_3526</name>
</gene>
<keyword id="KW-0997">Cell inner membrane</keyword>
<keyword id="KW-1003">Cell membrane</keyword>
<keyword id="KW-0472">Membrane</keyword>
<keyword id="KW-1185">Reference proteome</keyword>
<keyword id="KW-0812">Transmembrane</keyword>
<keyword id="KW-1133">Transmembrane helix</keyword>
<dbReference type="EMBL" id="CP000034">
    <property type="protein sequence ID" value="ABB63503.1"/>
    <property type="molecule type" value="Genomic_DNA"/>
</dbReference>
<dbReference type="RefSeq" id="WP_000185230.1">
    <property type="nucleotide sequence ID" value="NC_007606.1"/>
</dbReference>
<dbReference type="RefSeq" id="YP_404994.1">
    <property type="nucleotide sequence ID" value="NC_007606.1"/>
</dbReference>
<dbReference type="SMR" id="Q32B02"/>
<dbReference type="STRING" id="300267.SDY_3526"/>
<dbReference type="EnsemblBacteria" id="ABB63503">
    <property type="protein sequence ID" value="ABB63503"/>
    <property type="gene ID" value="SDY_3526"/>
</dbReference>
<dbReference type="KEGG" id="sdy:SDY_3526"/>
<dbReference type="PATRIC" id="fig|300267.13.peg.4180"/>
<dbReference type="HOGENOM" id="CLU_056916_0_0_6"/>
<dbReference type="Proteomes" id="UP000002716">
    <property type="component" value="Chromosome"/>
</dbReference>
<dbReference type="GO" id="GO:0005886">
    <property type="term" value="C:plasma membrane"/>
    <property type="evidence" value="ECO:0007669"/>
    <property type="project" value="UniProtKB-SubCell"/>
</dbReference>
<dbReference type="GO" id="GO:0022857">
    <property type="term" value="F:transmembrane transporter activity"/>
    <property type="evidence" value="ECO:0007669"/>
    <property type="project" value="InterPro"/>
</dbReference>
<dbReference type="CDD" id="cd17333">
    <property type="entry name" value="MFS_FucP_MFSD4_like"/>
    <property type="match status" value="1"/>
</dbReference>
<dbReference type="FunFam" id="1.20.1250.20:FF:000032">
    <property type="entry name" value="Protein TsgA"/>
    <property type="match status" value="1"/>
</dbReference>
<dbReference type="FunFam" id="1.20.1250.20:FF:000052">
    <property type="entry name" value="Protein TsgA"/>
    <property type="match status" value="1"/>
</dbReference>
<dbReference type="Gene3D" id="1.20.1250.20">
    <property type="entry name" value="MFS general substrate transporter like domains"/>
    <property type="match status" value="2"/>
</dbReference>
<dbReference type="HAMAP" id="MF_01044">
    <property type="entry name" value="MFS_TsgA"/>
    <property type="match status" value="1"/>
</dbReference>
<dbReference type="InterPro" id="IPR011701">
    <property type="entry name" value="MFS"/>
</dbReference>
<dbReference type="InterPro" id="IPR020846">
    <property type="entry name" value="MFS_dom"/>
</dbReference>
<dbReference type="InterPro" id="IPR036259">
    <property type="entry name" value="MFS_trans_sf"/>
</dbReference>
<dbReference type="InterPro" id="IPR023528">
    <property type="entry name" value="MFS_TsgA"/>
</dbReference>
<dbReference type="InterPro" id="IPR050375">
    <property type="entry name" value="MFS_TsgA-like"/>
</dbReference>
<dbReference type="NCBIfam" id="NF002982">
    <property type="entry name" value="PRK03699.1"/>
    <property type="match status" value="1"/>
</dbReference>
<dbReference type="PANTHER" id="PTHR43702">
    <property type="entry name" value="L-FUCOSE-PROTON SYMPORTER"/>
    <property type="match status" value="1"/>
</dbReference>
<dbReference type="PANTHER" id="PTHR43702:SF3">
    <property type="entry name" value="PROTEIN TSGA"/>
    <property type="match status" value="1"/>
</dbReference>
<dbReference type="Pfam" id="PF07690">
    <property type="entry name" value="MFS_1"/>
    <property type="match status" value="1"/>
</dbReference>
<dbReference type="SUPFAM" id="SSF103473">
    <property type="entry name" value="MFS general substrate transporter"/>
    <property type="match status" value="1"/>
</dbReference>
<dbReference type="PROSITE" id="PS50850">
    <property type="entry name" value="MFS"/>
    <property type="match status" value="1"/>
</dbReference>
<comment type="subcellular location">
    <subcellularLocation>
        <location evidence="1">Cell inner membrane</location>
        <topology evidence="1">Multi-pass membrane protein</topology>
    </subcellularLocation>
</comment>
<comment type="similarity">
    <text evidence="1">Belongs to the major facilitator superfamily. TsgA family.</text>
</comment>
<feature type="chain" id="PRO_1000064253" description="Protein TsgA">
    <location>
        <begin position="1"/>
        <end position="393"/>
    </location>
</feature>
<feature type="transmembrane region" description="Helical" evidence="1">
    <location>
        <begin position="11"/>
        <end position="31"/>
    </location>
</feature>
<feature type="transmembrane region" description="Helical" evidence="1">
    <location>
        <begin position="51"/>
        <end position="71"/>
    </location>
</feature>
<feature type="transmembrane region" description="Helical" evidence="1">
    <location>
        <begin position="78"/>
        <end position="98"/>
    </location>
</feature>
<feature type="transmembrane region" description="Helical" evidence="1">
    <location>
        <begin position="101"/>
        <end position="121"/>
    </location>
</feature>
<feature type="transmembrane region" description="Helical" evidence="1">
    <location>
        <begin position="134"/>
        <end position="154"/>
    </location>
</feature>
<feature type="transmembrane region" description="Helical" evidence="1">
    <location>
        <begin position="162"/>
        <end position="182"/>
    </location>
</feature>
<feature type="transmembrane region" description="Helical" evidence="1">
    <location>
        <begin position="206"/>
        <end position="226"/>
    </location>
</feature>
<feature type="transmembrane region" description="Helical" evidence="1">
    <location>
        <begin position="245"/>
        <end position="265"/>
    </location>
</feature>
<feature type="transmembrane region" description="Helical" evidence="1">
    <location>
        <begin position="273"/>
        <end position="293"/>
    </location>
</feature>
<feature type="transmembrane region" description="Helical" evidence="1">
    <location>
        <begin position="297"/>
        <end position="317"/>
    </location>
</feature>
<feature type="transmembrane region" description="Helical" evidence="1">
    <location>
        <begin position="332"/>
        <end position="352"/>
    </location>
</feature>
<feature type="transmembrane region" description="Helical" evidence="1">
    <location>
        <begin position="361"/>
        <end position="381"/>
    </location>
</feature>
<proteinExistence type="inferred from homology"/>
<reference key="1">
    <citation type="journal article" date="2005" name="Nucleic Acids Res.">
        <title>Genome dynamics and diversity of Shigella species, the etiologic agents of bacillary dysentery.</title>
        <authorList>
            <person name="Yang F."/>
            <person name="Yang J."/>
            <person name="Zhang X."/>
            <person name="Chen L."/>
            <person name="Jiang Y."/>
            <person name="Yan Y."/>
            <person name="Tang X."/>
            <person name="Wang J."/>
            <person name="Xiong Z."/>
            <person name="Dong J."/>
            <person name="Xue Y."/>
            <person name="Zhu Y."/>
            <person name="Xu X."/>
            <person name="Sun L."/>
            <person name="Chen S."/>
            <person name="Nie H."/>
            <person name="Peng J."/>
            <person name="Xu J."/>
            <person name="Wang Y."/>
            <person name="Yuan Z."/>
            <person name="Wen Y."/>
            <person name="Yao Z."/>
            <person name="Shen Y."/>
            <person name="Qiang B."/>
            <person name="Hou Y."/>
            <person name="Yu J."/>
            <person name="Jin Q."/>
        </authorList>
    </citation>
    <scope>NUCLEOTIDE SEQUENCE [LARGE SCALE GENOMIC DNA]</scope>
    <source>
        <strain>Sd197</strain>
    </source>
</reference>
<name>TSGA_SHIDS</name>
<organism>
    <name type="scientific">Shigella dysenteriae serotype 1 (strain Sd197)</name>
    <dbReference type="NCBI Taxonomy" id="300267"/>
    <lineage>
        <taxon>Bacteria</taxon>
        <taxon>Pseudomonadati</taxon>
        <taxon>Pseudomonadota</taxon>
        <taxon>Gammaproteobacteria</taxon>
        <taxon>Enterobacterales</taxon>
        <taxon>Enterobacteriaceae</taxon>
        <taxon>Shigella</taxon>
    </lineage>
</organism>
<sequence>MTNSNRIKLTWISFLSYALTGALVIVTGMVMGNIADYFNLPVSSMSNTFTFLNAGILISIFLNAWLMEIVPLKTQLRFGFLLMVLAVAGLMFSHSLALFSAAMFILGVVSGITMSIGTFLITQMYEGRQRGSRLLFTDSFFSMAGMIFPMIAAFLLARSIEWYWVYACIGLVYVAIFILTFGCEFPALGKHAPKTDAPVAKEKWGIGVLFLSVAALCYILGQLGFISWVPEYAKGLGMSLNDAGTLVSNFWMSYMVGMWAFSFILRFFDLQRILTVLAGLAAILMYVFNTGTPAHMAWSILTLGFFSSAIYTTIITLGSQQTKVPSPKLVNFVLTCGTIGTMLTFVVTGPIVEHSGPQAALLTANGLYAVVFVMCFLLGFVSRHRQHNTLTSH</sequence>
<protein>
    <recommendedName>
        <fullName evidence="1">Protein TsgA</fullName>
    </recommendedName>
</protein>
<evidence type="ECO:0000255" key="1">
    <source>
        <dbReference type="HAMAP-Rule" id="MF_01044"/>
    </source>
</evidence>